<dbReference type="EMBL" id="CP001089">
    <property type="protein sequence ID" value="ACD95062.1"/>
    <property type="molecule type" value="Genomic_DNA"/>
</dbReference>
<dbReference type="RefSeq" id="WP_012469408.1">
    <property type="nucleotide sequence ID" value="NC_010814.1"/>
</dbReference>
<dbReference type="SMR" id="B3E7T0"/>
<dbReference type="STRING" id="398767.Glov_1341"/>
<dbReference type="KEGG" id="glo:Glov_1341"/>
<dbReference type="eggNOG" id="COG0048">
    <property type="taxonomic scope" value="Bacteria"/>
</dbReference>
<dbReference type="HOGENOM" id="CLU_104295_1_2_7"/>
<dbReference type="OrthoDB" id="9802366at2"/>
<dbReference type="Proteomes" id="UP000002420">
    <property type="component" value="Chromosome"/>
</dbReference>
<dbReference type="GO" id="GO:0015935">
    <property type="term" value="C:small ribosomal subunit"/>
    <property type="evidence" value="ECO:0007669"/>
    <property type="project" value="InterPro"/>
</dbReference>
<dbReference type="GO" id="GO:0019843">
    <property type="term" value="F:rRNA binding"/>
    <property type="evidence" value="ECO:0007669"/>
    <property type="project" value="UniProtKB-UniRule"/>
</dbReference>
<dbReference type="GO" id="GO:0003735">
    <property type="term" value="F:structural constituent of ribosome"/>
    <property type="evidence" value="ECO:0007669"/>
    <property type="project" value="InterPro"/>
</dbReference>
<dbReference type="GO" id="GO:0000049">
    <property type="term" value="F:tRNA binding"/>
    <property type="evidence" value="ECO:0007669"/>
    <property type="project" value="UniProtKB-UniRule"/>
</dbReference>
<dbReference type="GO" id="GO:0006412">
    <property type="term" value="P:translation"/>
    <property type="evidence" value="ECO:0007669"/>
    <property type="project" value="UniProtKB-UniRule"/>
</dbReference>
<dbReference type="CDD" id="cd03368">
    <property type="entry name" value="Ribosomal_S12"/>
    <property type="match status" value="1"/>
</dbReference>
<dbReference type="FunFam" id="2.40.50.140:FF:000001">
    <property type="entry name" value="30S ribosomal protein S12"/>
    <property type="match status" value="1"/>
</dbReference>
<dbReference type="Gene3D" id="2.40.50.140">
    <property type="entry name" value="Nucleic acid-binding proteins"/>
    <property type="match status" value="1"/>
</dbReference>
<dbReference type="HAMAP" id="MF_00403_B">
    <property type="entry name" value="Ribosomal_uS12_B"/>
    <property type="match status" value="1"/>
</dbReference>
<dbReference type="InterPro" id="IPR012340">
    <property type="entry name" value="NA-bd_OB-fold"/>
</dbReference>
<dbReference type="InterPro" id="IPR006032">
    <property type="entry name" value="Ribosomal_uS12"/>
</dbReference>
<dbReference type="InterPro" id="IPR005679">
    <property type="entry name" value="Ribosomal_uS12_bac"/>
</dbReference>
<dbReference type="NCBIfam" id="TIGR00981">
    <property type="entry name" value="rpsL_bact"/>
    <property type="match status" value="1"/>
</dbReference>
<dbReference type="PANTHER" id="PTHR11652">
    <property type="entry name" value="30S RIBOSOMAL PROTEIN S12 FAMILY MEMBER"/>
    <property type="match status" value="1"/>
</dbReference>
<dbReference type="Pfam" id="PF00164">
    <property type="entry name" value="Ribosom_S12_S23"/>
    <property type="match status" value="1"/>
</dbReference>
<dbReference type="PIRSF" id="PIRSF002133">
    <property type="entry name" value="Ribosomal_S12/S23"/>
    <property type="match status" value="1"/>
</dbReference>
<dbReference type="PRINTS" id="PR01034">
    <property type="entry name" value="RIBOSOMALS12"/>
</dbReference>
<dbReference type="SUPFAM" id="SSF50249">
    <property type="entry name" value="Nucleic acid-binding proteins"/>
    <property type="match status" value="1"/>
</dbReference>
<dbReference type="PROSITE" id="PS00055">
    <property type="entry name" value="RIBOSOMAL_S12"/>
    <property type="match status" value="1"/>
</dbReference>
<accession>B3E7T0</accession>
<gene>
    <name evidence="2" type="primary">rpsL</name>
    <name type="ordered locus">Glov_1341</name>
</gene>
<protein>
    <recommendedName>
        <fullName evidence="2">Small ribosomal subunit protein uS12</fullName>
    </recommendedName>
    <alternativeName>
        <fullName evidence="3">30S ribosomal protein S12</fullName>
    </alternativeName>
</protein>
<feature type="chain" id="PRO_1000194174" description="Small ribosomal subunit protein uS12">
    <location>
        <begin position="1"/>
        <end position="123"/>
    </location>
</feature>
<feature type="modified residue" description="3-methylthioaspartic acid" evidence="1">
    <location>
        <position position="89"/>
    </location>
</feature>
<reference key="1">
    <citation type="submission" date="2008-05" db="EMBL/GenBank/DDBJ databases">
        <title>Complete sequence of chromosome of Geobacter lovleyi SZ.</title>
        <authorList>
            <consortium name="US DOE Joint Genome Institute"/>
            <person name="Lucas S."/>
            <person name="Copeland A."/>
            <person name="Lapidus A."/>
            <person name="Glavina del Rio T."/>
            <person name="Dalin E."/>
            <person name="Tice H."/>
            <person name="Bruce D."/>
            <person name="Goodwin L."/>
            <person name="Pitluck S."/>
            <person name="Chertkov O."/>
            <person name="Meincke L."/>
            <person name="Brettin T."/>
            <person name="Detter J.C."/>
            <person name="Han C."/>
            <person name="Tapia R."/>
            <person name="Kuske C.R."/>
            <person name="Schmutz J."/>
            <person name="Larimer F."/>
            <person name="Land M."/>
            <person name="Hauser L."/>
            <person name="Kyrpides N."/>
            <person name="Mikhailova N."/>
            <person name="Sung Y."/>
            <person name="Fletcher K.E."/>
            <person name="Ritalahti K.M."/>
            <person name="Loeffler F.E."/>
            <person name="Richardson P."/>
        </authorList>
    </citation>
    <scope>NUCLEOTIDE SEQUENCE [LARGE SCALE GENOMIC DNA]</scope>
    <source>
        <strain>ATCC BAA-1151 / DSM 17278 / SZ</strain>
    </source>
</reference>
<name>RS12_TRIL1</name>
<evidence type="ECO:0000250" key="1"/>
<evidence type="ECO:0000255" key="2">
    <source>
        <dbReference type="HAMAP-Rule" id="MF_00403"/>
    </source>
</evidence>
<evidence type="ECO:0000305" key="3"/>
<organism>
    <name type="scientific">Trichlorobacter lovleyi (strain ATCC BAA-1151 / DSM 17278 / SZ)</name>
    <name type="common">Geobacter lovleyi</name>
    <dbReference type="NCBI Taxonomy" id="398767"/>
    <lineage>
        <taxon>Bacteria</taxon>
        <taxon>Pseudomonadati</taxon>
        <taxon>Thermodesulfobacteriota</taxon>
        <taxon>Desulfuromonadia</taxon>
        <taxon>Geobacterales</taxon>
        <taxon>Geobacteraceae</taxon>
        <taxon>Trichlorobacter</taxon>
    </lineage>
</organism>
<comment type="function">
    <text evidence="2">With S4 and S5 plays an important role in translational accuracy.</text>
</comment>
<comment type="function">
    <text evidence="2">Interacts with and stabilizes bases of the 16S rRNA that are involved in tRNA selection in the A site and with the mRNA backbone. Located at the interface of the 30S and 50S subunits, it traverses the body of the 30S subunit contacting proteins on the other side and probably holding the rRNA structure together. The combined cluster of proteins S8, S12 and S17 appears to hold together the shoulder and platform of the 30S subunit.</text>
</comment>
<comment type="subunit">
    <text evidence="2">Part of the 30S ribosomal subunit. Contacts proteins S8 and S17. May interact with IF1 in the 30S initiation complex.</text>
</comment>
<comment type="similarity">
    <text evidence="2">Belongs to the universal ribosomal protein uS12 family.</text>
</comment>
<keyword id="KW-0488">Methylation</keyword>
<keyword id="KW-1185">Reference proteome</keyword>
<keyword id="KW-0687">Ribonucleoprotein</keyword>
<keyword id="KW-0689">Ribosomal protein</keyword>
<keyword id="KW-0694">RNA-binding</keyword>
<keyword id="KW-0699">rRNA-binding</keyword>
<keyword id="KW-0820">tRNA-binding</keyword>
<proteinExistence type="inferred from homology"/>
<sequence length="123" mass="13656">MPTINQLIRQGREKKRDKSTAPALKSCPQKRGVCTRVYTTTPKKPNSALRKVARVRLTNGIEVTSYIPGVGHNLQEHSVVLIRGGRVKDLPGVRYHIVRGTLDSVGVKGRMQGRSKYGAKRPK</sequence>